<comment type="similarity">
    <text evidence="1">Belongs to the universal ribosomal protein uS9 family.</text>
</comment>
<reference key="1">
    <citation type="journal article" date="2007" name="PLoS Genet.">
        <title>A tale of two oxidation states: bacterial colonization of arsenic-rich environments.</title>
        <authorList>
            <person name="Muller D."/>
            <person name="Medigue C."/>
            <person name="Koechler S."/>
            <person name="Barbe V."/>
            <person name="Barakat M."/>
            <person name="Talla E."/>
            <person name="Bonnefoy V."/>
            <person name="Krin E."/>
            <person name="Arsene-Ploetze F."/>
            <person name="Carapito C."/>
            <person name="Chandler M."/>
            <person name="Cournoyer B."/>
            <person name="Cruveiller S."/>
            <person name="Dossat C."/>
            <person name="Duval S."/>
            <person name="Heymann M."/>
            <person name="Leize E."/>
            <person name="Lieutaud A."/>
            <person name="Lievremont D."/>
            <person name="Makita Y."/>
            <person name="Mangenot S."/>
            <person name="Nitschke W."/>
            <person name="Ortet P."/>
            <person name="Perdrial N."/>
            <person name="Schoepp B."/>
            <person name="Siguier P."/>
            <person name="Simeonova D.D."/>
            <person name="Rouy Z."/>
            <person name="Segurens B."/>
            <person name="Turlin E."/>
            <person name="Vallenet D."/>
            <person name="van Dorsselaer A."/>
            <person name="Weiss S."/>
            <person name="Weissenbach J."/>
            <person name="Lett M.-C."/>
            <person name="Danchin A."/>
            <person name="Bertin P.N."/>
        </authorList>
    </citation>
    <scope>NUCLEOTIDE SEQUENCE [LARGE SCALE GENOMIC DNA]</scope>
    <source>
        <strain>ULPAs1</strain>
    </source>
</reference>
<dbReference type="EMBL" id="CU207211">
    <property type="protein sequence ID" value="CAL60470.1"/>
    <property type="molecule type" value="Genomic_DNA"/>
</dbReference>
<dbReference type="SMR" id="A4G1T3"/>
<dbReference type="STRING" id="204773.HEAR0241"/>
<dbReference type="KEGG" id="har:HEAR0241"/>
<dbReference type="eggNOG" id="COG0103">
    <property type="taxonomic scope" value="Bacteria"/>
</dbReference>
<dbReference type="HOGENOM" id="CLU_046483_2_1_4"/>
<dbReference type="OrthoDB" id="9803965at2"/>
<dbReference type="Proteomes" id="UP000006697">
    <property type="component" value="Chromosome"/>
</dbReference>
<dbReference type="GO" id="GO:0022627">
    <property type="term" value="C:cytosolic small ribosomal subunit"/>
    <property type="evidence" value="ECO:0007669"/>
    <property type="project" value="TreeGrafter"/>
</dbReference>
<dbReference type="GO" id="GO:0003723">
    <property type="term" value="F:RNA binding"/>
    <property type="evidence" value="ECO:0007669"/>
    <property type="project" value="TreeGrafter"/>
</dbReference>
<dbReference type="GO" id="GO:0003735">
    <property type="term" value="F:structural constituent of ribosome"/>
    <property type="evidence" value="ECO:0007669"/>
    <property type="project" value="InterPro"/>
</dbReference>
<dbReference type="GO" id="GO:0006412">
    <property type="term" value="P:translation"/>
    <property type="evidence" value="ECO:0007669"/>
    <property type="project" value="UniProtKB-UniRule"/>
</dbReference>
<dbReference type="FunFam" id="3.30.230.10:FF:000001">
    <property type="entry name" value="30S ribosomal protein S9"/>
    <property type="match status" value="1"/>
</dbReference>
<dbReference type="Gene3D" id="3.30.230.10">
    <property type="match status" value="1"/>
</dbReference>
<dbReference type="HAMAP" id="MF_00532_B">
    <property type="entry name" value="Ribosomal_uS9_B"/>
    <property type="match status" value="1"/>
</dbReference>
<dbReference type="InterPro" id="IPR020568">
    <property type="entry name" value="Ribosomal_Su5_D2-typ_SF"/>
</dbReference>
<dbReference type="InterPro" id="IPR000754">
    <property type="entry name" value="Ribosomal_uS9"/>
</dbReference>
<dbReference type="InterPro" id="IPR023035">
    <property type="entry name" value="Ribosomal_uS9_bac/plastid"/>
</dbReference>
<dbReference type="InterPro" id="IPR020574">
    <property type="entry name" value="Ribosomal_uS9_CS"/>
</dbReference>
<dbReference type="InterPro" id="IPR014721">
    <property type="entry name" value="Ribsml_uS5_D2-typ_fold_subgr"/>
</dbReference>
<dbReference type="NCBIfam" id="NF001099">
    <property type="entry name" value="PRK00132.1"/>
    <property type="match status" value="1"/>
</dbReference>
<dbReference type="PANTHER" id="PTHR21569">
    <property type="entry name" value="RIBOSOMAL PROTEIN S9"/>
    <property type="match status" value="1"/>
</dbReference>
<dbReference type="PANTHER" id="PTHR21569:SF1">
    <property type="entry name" value="SMALL RIBOSOMAL SUBUNIT PROTEIN US9M"/>
    <property type="match status" value="1"/>
</dbReference>
<dbReference type="Pfam" id="PF00380">
    <property type="entry name" value="Ribosomal_S9"/>
    <property type="match status" value="1"/>
</dbReference>
<dbReference type="SUPFAM" id="SSF54211">
    <property type="entry name" value="Ribosomal protein S5 domain 2-like"/>
    <property type="match status" value="1"/>
</dbReference>
<dbReference type="PROSITE" id="PS00360">
    <property type="entry name" value="RIBOSOMAL_S9"/>
    <property type="match status" value="1"/>
</dbReference>
<sequence>MIGNYNYGTGRRKSAVARVFIKSGSGQIVVNGKPANEYFSRETGLMVIRQPLELTNNVETFDIMVNVNGGGESGQAGAVRHGITRALIDYDATLKPELSKAGFVTRDAREVERKKVGLRKARRAKQFSKR</sequence>
<gene>
    <name evidence="1" type="primary">rpsI</name>
    <name type="ordered locus">HEAR0241</name>
</gene>
<name>RS9_HERAR</name>
<accession>A4G1T3</accession>
<protein>
    <recommendedName>
        <fullName evidence="1">Small ribosomal subunit protein uS9</fullName>
    </recommendedName>
    <alternativeName>
        <fullName evidence="2">30S ribosomal protein S9</fullName>
    </alternativeName>
</protein>
<organism>
    <name type="scientific">Herminiimonas arsenicoxydans</name>
    <dbReference type="NCBI Taxonomy" id="204773"/>
    <lineage>
        <taxon>Bacteria</taxon>
        <taxon>Pseudomonadati</taxon>
        <taxon>Pseudomonadota</taxon>
        <taxon>Betaproteobacteria</taxon>
        <taxon>Burkholderiales</taxon>
        <taxon>Oxalobacteraceae</taxon>
        <taxon>Herminiimonas</taxon>
    </lineage>
</organism>
<proteinExistence type="inferred from homology"/>
<keyword id="KW-1185">Reference proteome</keyword>
<keyword id="KW-0687">Ribonucleoprotein</keyword>
<keyword id="KW-0689">Ribosomal protein</keyword>
<feature type="chain" id="PRO_1000051234" description="Small ribosomal subunit protein uS9">
    <location>
        <begin position="1"/>
        <end position="130"/>
    </location>
</feature>
<evidence type="ECO:0000255" key="1">
    <source>
        <dbReference type="HAMAP-Rule" id="MF_00532"/>
    </source>
</evidence>
<evidence type="ECO:0000305" key="2"/>